<feature type="chain" id="PRO_0000204592" description="DNA polymerase III PolC-type">
    <location>
        <begin position="1"/>
        <end position="1436"/>
    </location>
</feature>
<feature type="domain" description="Exonuclease">
    <location>
        <begin position="420"/>
        <end position="576"/>
    </location>
</feature>
<dbReference type="EC" id="2.7.7.7" evidence="1"/>
<dbReference type="EMBL" id="BA000033">
    <property type="protein sequence ID" value="BAB95012.1"/>
    <property type="status" value="ALT_INIT"/>
    <property type="molecule type" value="Genomic_DNA"/>
</dbReference>
<dbReference type="RefSeq" id="WP_001820550.1">
    <property type="nucleotide sequence ID" value="NC_003923.1"/>
</dbReference>
<dbReference type="SMR" id="P68852"/>
<dbReference type="KEGG" id="sam:MW1147"/>
<dbReference type="HOGENOM" id="CLU_003297_2_0_9"/>
<dbReference type="GO" id="GO:0005737">
    <property type="term" value="C:cytoplasm"/>
    <property type="evidence" value="ECO:0007669"/>
    <property type="project" value="UniProtKB-SubCell"/>
</dbReference>
<dbReference type="GO" id="GO:0008408">
    <property type="term" value="F:3'-5' exonuclease activity"/>
    <property type="evidence" value="ECO:0007669"/>
    <property type="project" value="UniProtKB-UniRule"/>
</dbReference>
<dbReference type="GO" id="GO:0003677">
    <property type="term" value="F:DNA binding"/>
    <property type="evidence" value="ECO:0007669"/>
    <property type="project" value="UniProtKB-UniRule"/>
</dbReference>
<dbReference type="GO" id="GO:0003887">
    <property type="term" value="F:DNA-directed DNA polymerase activity"/>
    <property type="evidence" value="ECO:0007669"/>
    <property type="project" value="UniProtKB-UniRule"/>
</dbReference>
<dbReference type="GO" id="GO:0006261">
    <property type="term" value="P:DNA-templated DNA replication"/>
    <property type="evidence" value="ECO:0007669"/>
    <property type="project" value="UniProtKB-UniRule"/>
</dbReference>
<dbReference type="CDD" id="cd06127">
    <property type="entry name" value="DEDDh"/>
    <property type="match status" value="1"/>
</dbReference>
<dbReference type="CDD" id="cd07435">
    <property type="entry name" value="PHP_PolIIIA_POLC"/>
    <property type="match status" value="1"/>
</dbReference>
<dbReference type="CDD" id="cd04484">
    <property type="entry name" value="polC_OBF"/>
    <property type="match status" value="1"/>
</dbReference>
<dbReference type="FunFam" id="3.30.420.10:FF:000045">
    <property type="entry name" value="3'-5' exonuclease DinG"/>
    <property type="match status" value="1"/>
</dbReference>
<dbReference type="Gene3D" id="1.10.150.870">
    <property type="match status" value="1"/>
</dbReference>
<dbReference type="Gene3D" id="3.30.1900.20">
    <property type="match status" value="2"/>
</dbReference>
<dbReference type="Gene3D" id="6.10.140.1510">
    <property type="match status" value="1"/>
</dbReference>
<dbReference type="Gene3D" id="3.20.20.140">
    <property type="entry name" value="Metal-dependent hydrolases"/>
    <property type="match status" value="1"/>
</dbReference>
<dbReference type="Gene3D" id="2.40.50.140">
    <property type="entry name" value="Nucleic acid-binding proteins"/>
    <property type="match status" value="1"/>
</dbReference>
<dbReference type="Gene3D" id="1.10.150.700">
    <property type="entry name" value="PolC, middle finger domain"/>
    <property type="match status" value="1"/>
</dbReference>
<dbReference type="Gene3D" id="3.30.420.10">
    <property type="entry name" value="Ribonuclease H-like superfamily/Ribonuclease H"/>
    <property type="match status" value="1"/>
</dbReference>
<dbReference type="HAMAP" id="MF_00356">
    <property type="entry name" value="DNApol_PolC"/>
    <property type="match status" value="1"/>
</dbReference>
<dbReference type="InterPro" id="IPR011708">
    <property type="entry name" value="DNA_pol3_alpha_NTPase_dom"/>
</dbReference>
<dbReference type="InterPro" id="IPR040982">
    <property type="entry name" value="DNA_pol3_finger"/>
</dbReference>
<dbReference type="InterPro" id="IPR024754">
    <property type="entry name" value="DNA_PolC-like_N_II"/>
</dbReference>
<dbReference type="InterPro" id="IPR028112">
    <property type="entry name" value="DNA_PolC-type_N_I"/>
</dbReference>
<dbReference type="InterPro" id="IPR004805">
    <property type="entry name" value="DnaE2/DnaE/PolC"/>
</dbReference>
<dbReference type="InterPro" id="IPR029460">
    <property type="entry name" value="DNAPol_HHH"/>
</dbReference>
<dbReference type="InterPro" id="IPR006054">
    <property type="entry name" value="DnaQ"/>
</dbReference>
<dbReference type="InterPro" id="IPR013520">
    <property type="entry name" value="Exonuclease_RNaseT/DNA_pol3"/>
</dbReference>
<dbReference type="InterPro" id="IPR012340">
    <property type="entry name" value="NA-bd_OB-fold"/>
</dbReference>
<dbReference type="InterPro" id="IPR004013">
    <property type="entry name" value="PHP_dom"/>
</dbReference>
<dbReference type="InterPro" id="IPR003141">
    <property type="entry name" value="Pol/His_phosphatase_N"/>
</dbReference>
<dbReference type="InterPro" id="IPR006308">
    <property type="entry name" value="Pol_III_a_PolC-type_gram_pos"/>
</dbReference>
<dbReference type="InterPro" id="IPR044923">
    <property type="entry name" value="PolC_middle_finger_sf"/>
</dbReference>
<dbReference type="InterPro" id="IPR012337">
    <property type="entry name" value="RNaseH-like_sf"/>
</dbReference>
<dbReference type="InterPro" id="IPR036397">
    <property type="entry name" value="RNaseH_sf"/>
</dbReference>
<dbReference type="NCBIfam" id="TIGR00573">
    <property type="entry name" value="dnaq"/>
    <property type="match status" value="1"/>
</dbReference>
<dbReference type="NCBIfam" id="TIGR01405">
    <property type="entry name" value="polC_Gram_pos"/>
    <property type="match status" value="1"/>
</dbReference>
<dbReference type="NCBIfam" id="NF001688">
    <property type="entry name" value="PRK00448.1"/>
    <property type="match status" value="1"/>
</dbReference>
<dbReference type="PANTHER" id="PTHR32294:SF5">
    <property type="entry name" value="DNA POLYMERASE III POLC-TYPE"/>
    <property type="match status" value="1"/>
</dbReference>
<dbReference type="PANTHER" id="PTHR32294">
    <property type="entry name" value="DNA POLYMERASE III SUBUNIT ALPHA"/>
    <property type="match status" value="1"/>
</dbReference>
<dbReference type="Pfam" id="PF14480">
    <property type="entry name" value="DNA_pol3_a_NI"/>
    <property type="match status" value="1"/>
</dbReference>
<dbReference type="Pfam" id="PF11490">
    <property type="entry name" value="DNA_pol3_a_NII"/>
    <property type="match status" value="1"/>
</dbReference>
<dbReference type="Pfam" id="PF07733">
    <property type="entry name" value="DNA_pol3_alpha"/>
    <property type="match status" value="2"/>
</dbReference>
<dbReference type="Pfam" id="PF17657">
    <property type="entry name" value="DNA_pol3_finger"/>
    <property type="match status" value="1"/>
</dbReference>
<dbReference type="Pfam" id="PF14579">
    <property type="entry name" value="HHH_6"/>
    <property type="match status" value="1"/>
</dbReference>
<dbReference type="Pfam" id="PF02811">
    <property type="entry name" value="PHP"/>
    <property type="match status" value="2"/>
</dbReference>
<dbReference type="Pfam" id="PF00929">
    <property type="entry name" value="RNase_T"/>
    <property type="match status" value="1"/>
</dbReference>
<dbReference type="SMART" id="SM00479">
    <property type="entry name" value="EXOIII"/>
    <property type="match status" value="1"/>
</dbReference>
<dbReference type="SMART" id="SM00481">
    <property type="entry name" value="POLIIIAc"/>
    <property type="match status" value="1"/>
</dbReference>
<dbReference type="SUPFAM" id="SSF81585">
    <property type="entry name" value="PsbU/PolX domain-like"/>
    <property type="match status" value="1"/>
</dbReference>
<dbReference type="SUPFAM" id="SSF53098">
    <property type="entry name" value="Ribonuclease H-like"/>
    <property type="match status" value="1"/>
</dbReference>
<organism>
    <name type="scientific">Staphylococcus aureus (strain MW2)</name>
    <dbReference type="NCBI Taxonomy" id="196620"/>
    <lineage>
        <taxon>Bacteria</taxon>
        <taxon>Bacillati</taxon>
        <taxon>Bacillota</taxon>
        <taxon>Bacilli</taxon>
        <taxon>Bacillales</taxon>
        <taxon>Staphylococcaceae</taxon>
        <taxon>Staphylococcus</taxon>
    </lineage>
</organism>
<gene>
    <name evidence="1" type="primary">polC</name>
    <name type="ordered locus">MW1147</name>
</gene>
<evidence type="ECO:0000255" key="1">
    <source>
        <dbReference type="HAMAP-Rule" id="MF_00356"/>
    </source>
</evidence>
<evidence type="ECO:0000305" key="2"/>
<protein>
    <recommendedName>
        <fullName evidence="1">DNA polymerase III PolC-type</fullName>
        <shortName evidence="1">PolIII</shortName>
        <ecNumber evidence="1">2.7.7.7</ecNumber>
    </recommendedName>
</protein>
<name>DPO3_STAAW</name>
<accession>P68852</accession>
<accession>Q53665</accession>
<accession>Q57110</accession>
<accession>Q9F1J9</accession>
<keyword id="KW-0963">Cytoplasm</keyword>
<keyword id="KW-0235">DNA replication</keyword>
<keyword id="KW-0239">DNA-directed DNA polymerase</keyword>
<keyword id="KW-0269">Exonuclease</keyword>
<keyword id="KW-0378">Hydrolase</keyword>
<keyword id="KW-0540">Nuclease</keyword>
<keyword id="KW-0548">Nucleotidyltransferase</keyword>
<keyword id="KW-0808">Transferase</keyword>
<sequence>MTEQQKFKVLADQIKISNQLDAEILNSGELTRIDVSNKNRTWEFHITLPQFLAHEDYLLFINAIEQEFKDIANVTCRFTVTNGTNQDEHAIKYFGHCIDQTALSPKVKGQLKQKKLIMSGKVLKVMVSNDIERNHFDKACNGSLIKAFRNCGFDIDKIIFETNDNDQEQNLASLEAHIQEEDEQSARLATEKLEKMKAEKAKQQDNNESAVDKCQIGKPIQIENIKPIESIIEEEFKVAIEGVIFDINLKELKSGRHIVEIKVTDYTDSLVLKMFTRKNKDDLEHFKALSVGKWVRAQGRIEEDTFIRDLVMMMSDIEEIKKATKKDKAEEKRVEFHLHTAMSQMDGIPNIGAYVKQAADWGHPAIAVTDHNVVQAFPDAHAAAEKHGIKMIYGMEGMLVDDGVPIAYKPQDVVLKDATYVVFDVETTGLSNQYDKIIELAAVKVHNGEIIDKFERFSNPHERLSETIINLTHITDDMLVDAPEIEEVLTEFKEWVGDAIFVAHNASFDMGFIDTGYERLGFGPSTNGVIDTLELSRTINTEYGKHGLNFLAKKYGVELTQHHRAIYDTEATAYIFIKMVQQMKELGVLNHNEINKKLSNEDAYKRARPSHVTLIVQNQQGLKNLFKIVSASLVKYFYRTPRIPRSLLDEYREGLLVGTACDEGELFTAVMQKDQSQVEKIAKYYDFIEIQPPALYQDLIDRELIRDTETLHEIYQRLIHAGDTAGIPVIATGNAHYLFEHDGIARKILIASQPGNPLNRSTLPEAHFRTTDEMLNEFHFLGEEKAHEIVVKNTNELADRIERVVPIKDELYTPRMEGANEEIRELSYANARKLYGEDLPQIVIDRLEKELKSIIGNGFAVIYLISQRLVKKSLDDGYLVGSRGSVGSSFVATMTEITEVNPLPPHYICPNCKTSEFFNDGSVGSGFDLPDKTCETCGAPLIKEGQDIPFETFLGFKGDKVPDIDLNFSGEYQPNAHNYTKVLFGEDKVFRAGTIGTVAEKTAFGYVKGYLNDQGIHKRGAEIDRLVKGCTGVKRTTGQHPGGIIVVPDYMDIYDFTPIQYPADDQNSAWMTTHFDFHSIHDNVLKLDILGHDDPTMIRMLQDLSGIDPKTIPVDDKEVMQIFSTPESLGVTEDEILCKTGTFGVPEFGTGFVRQMLEDTKPTTFSELVQISGLSHGTDVWLGNAQELIKTGICDLSSVIGCRDDIMVYLMYAGLEPSMAFKIMESVRKGKGLTEEMIETMKENEVPDWYLDSCLKIKYMFPKAHAAAYVLMAVRIAYFKVHHPLYYYASYFTIRASDFDLITMIKDKTSIRNTVKDMYSRYMDLGKKEKDVLTVLEIMNEMAHRGYRMQPISLEKSQAFEFIIEGDTLIPPFISVPGLGENVAKRIVEARDDGPFLSKEDLNKKAGLSQKIIEYLDELGSLPNLPDKAQLSIFDM</sequence>
<proteinExistence type="inferred from homology"/>
<reference key="1">
    <citation type="journal article" date="2002" name="Lancet">
        <title>Genome and virulence determinants of high virulence community-acquired MRSA.</title>
        <authorList>
            <person name="Baba T."/>
            <person name="Takeuchi F."/>
            <person name="Kuroda M."/>
            <person name="Yuzawa H."/>
            <person name="Aoki K."/>
            <person name="Oguchi A."/>
            <person name="Nagai Y."/>
            <person name="Iwama N."/>
            <person name="Asano K."/>
            <person name="Naimi T."/>
            <person name="Kuroda H."/>
            <person name="Cui L."/>
            <person name="Yamamoto K."/>
            <person name="Hiramatsu K."/>
        </authorList>
    </citation>
    <scope>NUCLEOTIDE SEQUENCE [LARGE SCALE GENOMIC DNA]</scope>
    <source>
        <strain>MW2</strain>
    </source>
</reference>
<comment type="function">
    <text>Required for replicative DNA synthesis. This DNA polymerase also exhibits 3' to 5' exonuclease activity.</text>
</comment>
<comment type="catalytic activity">
    <reaction evidence="1">
        <text>DNA(n) + a 2'-deoxyribonucleoside 5'-triphosphate = DNA(n+1) + diphosphate</text>
        <dbReference type="Rhea" id="RHEA:22508"/>
        <dbReference type="Rhea" id="RHEA-COMP:17339"/>
        <dbReference type="Rhea" id="RHEA-COMP:17340"/>
        <dbReference type="ChEBI" id="CHEBI:33019"/>
        <dbReference type="ChEBI" id="CHEBI:61560"/>
        <dbReference type="ChEBI" id="CHEBI:173112"/>
        <dbReference type="EC" id="2.7.7.7"/>
    </reaction>
</comment>
<comment type="subcellular location">
    <subcellularLocation>
        <location evidence="1">Cytoplasm</location>
    </subcellularLocation>
</comment>
<comment type="similarity">
    <text evidence="1">Belongs to the DNA polymerase type-C family. PolC subfamily.</text>
</comment>
<comment type="sequence caution" evidence="2">
    <conflict type="erroneous initiation">
        <sequence resource="EMBL-CDS" id="BAB95012"/>
    </conflict>
</comment>